<gene>
    <name evidence="1" type="primary">pyrD</name>
    <name type="ordered locus">CKO_02123</name>
</gene>
<evidence type="ECO:0000255" key="1">
    <source>
        <dbReference type="HAMAP-Rule" id="MF_00225"/>
    </source>
</evidence>
<feature type="chain" id="PRO_1000024165" description="Dihydroorotate dehydrogenase (quinone)">
    <location>
        <begin position="1"/>
        <end position="336"/>
    </location>
</feature>
<feature type="active site" description="Nucleophile" evidence="1">
    <location>
        <position position="175"/>
    </location>
</feature>
<feature type="binding site" evidence="1">
    <location>
        <begin position="62"/>
        <end position="66"/>
    </location>
    <ligand>
        <name>FMN</name>
        <dbReference type="ChEBI" id="CHEBI:58210"/>
    </ligand>
</feature>
<feature type="binding site" evidence="1">
    <location>
        <position position="66"/>
    </location>
    <ligand>
        <name>substrate</name>
    </ligand>
</feature>
<feature type="binding site" evidence="1">
    <location>
        <position position="86"/>
    </location>
    <ligand>
        <name>FMN</name>
        <dbReference type="ChEBI" id="CHEBI:58210"/>
    </ligand>
</feature>
<feature type="binding site" evidence="1">
    <location>
        <begin position="111"/>
        <end position="115"/>
    </location>
    <ligand>
        <name>substrate</name>
    </ligand>
</feature>
<feature type="binding site" evidence="1">
    <location>
        <position position="139"/>
    </location>
    <ligand>
        <name>FMN</name>
        <dbReference type="ChEBI" id="CHEBI:58210"/>
    </ligand>
</feature>
<feature type="binding site" evidence="1">
    <location>
        <position position="172"/>
    </location>
    <ligand>
        <name>FMN</name>
        <dbReference type="ChEBI" id="CHEBI:58210"/>
    </ligand>
</feature>
<feature type="binding site" evidence="1">
    <location>
        <position position="172"/>
    </location>
    <ligand>
        <name>substrate</name>
    </ligand>
</feature>
<feature type="binding site" evidence="1">
    <location>
        <position position="177"/>
    </location>
    <ligand>
        <name>substrate</name>
    </ligand>
</feature>
<feature type="binding site" evidence="1">
    <location>
        <position position="217"/>
    </location>
    <ligand>
        <name>FMN</name>
        <dbReference type="ChEBI" id="CHEBI:58210"/>
    </ligand>
</feature>
<feature type="binding site" evidence="1">
    <location>
        <position position="245"/>
    </location>
    <ligand>
        <name>FMN</name>
        <dbReference type="ChEBI" id="CHEBI:58210"/>
    </ligand>
</feature>
<feature type="binding site" evidence="1">
    <location>
        <begin position="246"/>
        <end position="247"/>
    </location>
    <ligand>
        <name>substrate</name>
    </ligand>
</feature>
<feature type="binding site" evidence="1">
    <location>
        <position position="268"/>
    </location>
    <ligand>
        <name>FMN</name>
        <dbReference type="ChEBI" id="CHEBI:58210"/>
    </ligand>
</feature>
<feature type="binding site" evidence="1">
    <location>
        <position position="297"/>
    </location>
    <ligand>
        <name>FMN</name>
        <dbReference type="ChEBI" id="CHEBI:58210"/>
    </ligand>
</feature>
<feature type="binding site" evidence="1">
    <location>
        <begin position="318"/>
        <end position="319"/>
    </location>
    <ligand>
        <name>FMN</name>
        <dbReference type="ChEBI" id="CHEBI:58210"/>
    </ligand>
</feature>
<keyword id="KW-1003">Cell membrane</keyword>
<keyword id="KW-0285">Flavoprotein</keyword>
<keyword id="KW-0288">FMN</keyword>
<keyword id="KW-0472">Membrane</keyword>
<keyword id="KW-0560">Oxidoreductase</keyword>
<keyword id="KW-0665">Pyrimidine biosynthesis</keyword>
<keyword id="KW-1185">Reference proteome</keyword>
<name>PYRD_CITK8</name>
<protein>
    <recommendedName>
        <fullName evidence="1">Dihydroorotate dehydrogenase (quinone)</fullName>
        <ecNumber evidence="1">1.3.5.2</ecNumber>
    </recommendedName>
    <alternativeName>
        <fullName evidence="1">DHOdehase</fullName>
        <shortName evidence="1">DHOD</shortName>
        <shortName evidence="1">DHODase</shortName>
    </alternativeName>
    <alternativeName>
        <fullName evidence="1">Dihydroorotate oxidase</fullName>
    </alternativeName>
</protein>
<organism>
    <name type="scientific">Citrobacter koseri (strain ATCC BAA-895 / CDC 4225-83 / SGSC4696)</name>
    <dbReference type="NCBI Taxonomy" id="290338"/>
    <lineage>
        <taxon>Bacteria</taxon>
        <taxon>Pseudomonadati</taxon>
        <taxon>Pseudomonadota</taxon>
        <taxon>Gammaproteobacteria</taxon>
        <taxon>Enterobacterales</taxon>
        <taxon>Enterobacteriaceae</taxon>
        <taxon>Citrobacter</taxon>
    </lineage>
</organism>
<reference key="1">
    <citation type="submission" date="2007-08" db="EMBL/GenBank/DDBJ databases">
        <authorList>
            <consortium name="The Citrobacter koseri Genome Sequencing Project"/>
            <person name="McClelland M."/>
            <person name="Sanderson E.K."/>
            <person name="Porwollik S."/>
            <person name="Spieth J."/>
            <person name="Clifton W.S."/>
            <person name="Latreille P."/>
            <person name="Courtney L."/>
            <person name="Wang C."/>
            <person name="Pepin K."/>
            <person name="Bhonagiri V."/>
            <person name="Nash W."/>
            <person name="Johnson M."/>
            <person name="Thiruvilangam P."/>
            <person name="Wilson R."/>
        </authorList>
    </citation>
    <scope>NUCLEOTIDE SEQUENCE [LARGE SCALE GENOMIC DNA]</scope>
    <source>
        <strain>ATCC BAA-895 / CDC 4225-83 / SGSC4696</strain>
    </source>
</reference>
<proteinExistence type="inferred from homology"/>
<comment type="function">
    <text evidence="1">Catalyzes the conversion of dihydroorotate to orotate with quinone as electron acceptor.</text>
</comment>
<comment type="catalytic activity">
    <reaction evidence="1">
        <text>(S)-dihydroorotate + a quinone = orotate + a quinol</text>
        <dbReference type="Rhea" id="RHEA:30187"/>
        <dbReference type="ChEBI" id="CHEBI:24646"/>
        <dbReference type="ChEBI" id="CHEBI:30839"/>
        <dbReference type="ChEBI" id="CHEBI:30864"/>
        <dbReference type="ChEBI" id="CHEBI:132124"/>
        <dbReference type="EC" id="1.3.5.2"/>
    </reaction>
</comment>
<comment type="cofactor">
    <cofactor evidence="1">
        <name>FMN</name>
        <dbReference type="ChEBI" id="CHEBI:58210"/>
    </cofactor>
    <text evidence="1">Binds 1 FMN per subunit.</text>
</comment>
<comment type="pathway">
    <text evidence="1">Pyrimidine metabolism; UMP biosynthesis via de novo pathway; orotate from (S)-dihydroorotate (quinone route): step 1/1.</text>
</comment>
<comment type="subunit">
    <text evidence="1">Monomer.</text>
</comment>
<comment type="subcellular location">
    <subcellularLocation>
        <location evidence="1">Cell membrane</location>
        <topology evidence="1">Peripheral membrane protein</topology>
    </subcellularLocation>
</comment>
<comment type="similarity">
    <text evidence="1">Belongs to the dihydroorotate dehydrogenase family. Type 2 subfamily.</text>
</comment>
<sequence>MYYPFVRKALFQLDPERAHEFTFQQLRRVTGTPLEALVRQKVPAKPVSCMGLTFKNPLGLAAGLDKDGECIDALGAMGFGSIEIGTVTPRPQPGNDKPRLFRLVDAEGLINRMGFNNLGVDNLVENVKKAHFDGILGINIGKNKDTPVENGKDDYLICMEKIYAYAGYIAINISSPNTPGLRTLQYGEALDDLLTAIKNKQNDLQTIHHKYVPIAVKIAPDLSEDELIQVADSLVRHNIDGVIATNTTLDRSLVQGMKNCDETGGLSGRPLQLKSTEIIRRLSQELKEQLPIIGVGGIDSVIAAREKMAAGATLVQIYSGFIFKGPQLIKEIVTHI</sequence>
<accession>A8AID4</accession>
<dbReference type="EC" id="1.3.5.2" evidence="1"/>
<dbReference type="EMBL" id="CP000822">
    <property type="protein sequence ID" value="ABV13247.1"/>
    <property type="molecule type" value="Genomic_DNA"/>
</dbReference>
<dbReference type="RefSeq" id="WP_012132979.1">
    <property type="nucleotide sequence ID" value="NC_009792.1"/>
</dbReference>
<dbReference type="SMR" id="A8AID4"/>
<dbReference type="STRING" id="290338.CKO_02123"/>
<dbReference type="GeneID" id="45136070"/>
<dbReference type="KEGG" id="cko:CKO_02123"/>
<dbReference type="HOGENOM" id="CLU_013640_2_0_6"/>
<dbReference type="OrthoDB" id="9802377at2"/>
<dbReference type="UniPathway" id="UPA00070">
    <property type="reaction ID" value="UER00946"/>
</dbReference>
<dbReference type="Proteomes" id="UP000008148">
    <property type="component" value="Chromosome"/>
</dbReference>
<dbReference type="GO" id="GO:0005737">
    <property type="term" value="C:cytoplasm"/>
    <property type="evidence" value="ECO:0007669"/>
    <property type="project" value="InterPro"/>
</dbReference>
<dbReference type="GO" id="GO:0005886">
    <property type="term" value="C:plasma membrane"/>
    <property type="evidence" value="ECO:0007669"/>
    <property type="project" value="UniProtKB-SubCell"/>
</dbReference>
<dbReference type="GO" id="GO:0106430">
    <property type="term" value="F:dihydroorotate dehydrogenase (quinone) activity"/>
    <property type="evidence" value="ECO:0007669"/>
    <property type="project" value="UniProtKB-EC"/>
</dbReference>
<dbReference type="GO" id="GO:0006207">
    <property type="term" value="P:'de novo' pyrimidine nucleobase biosynthetic process"/>
    <property type="evidence" value="ECO:0007669"/>
    <property type="project" value="InterPro"/>
</dbReference>
<dbReference type="GO" id="GO:0044205">
    <property type="term" value="P:'de novo' UMP biosynthetic process"/>
    <property type="evidence" value="ECO:0007669"/>
    <property type="project" value="UniProtKB-UniRule"/>
</dbReference>
<dbReference type="CDD" id="cd04738">
    <property type="entry name" value="DHOD_2_like"/>
    <property type="match status" value="1"/>
</dbReference>
<dbReference type="FunFam" id="3.20.20.70:FF:000028">
    <property type="entry name" value="Dihydroorotate dehydrogenase (quinone)"/>
    <property type="match status" value="1"/>
</dbReference>
<dbReference type="Gene3D" id="3.20.20.70">
    <property type="entry name" value="Aldolase class I"/>
    <property type="match status" value="1"/>
</dbReference>
<dbReference type="HAMAP" id="MF_00225">
    <property type="entry name" value="DHO_dh_type2"/>
    <property type="match status" value="1"/>
</dbReference>
<dbReference type="InterPro" id="IPR013785">
    <property type="entry name" value="Aldolase_TIM"/>
</dbReference>
<dbReference type="InterPro" id="IPR050074">
    <property type="entry name" value="DHO_dehydrogenase"/>
</dbReference>
<dbReference type="InterPro" id="IPR012135">
    <property type="entry name" value="Dihydroorotate_DH_1_2"/>
</dbReference>
<dbReference type="InterPro" id="IPR005719">
    <property type="entry name" value="Dihydroorotate_DH_2"/>
</dbReference>
<dbReference type="InterPro" id="IPR005720">
    <property type="entry name" value="Dihydroorotate_DH_cat"/>
</dbReference>
<dbReference type="InterPro" id="IPR001295">
    <property type="entry name" value="Dihydroorotate_DH_CS"/>
</dbReference>
<dbReference type="NCBIfam" id="NF003644">
    <property type="entry name" value="PRK05286.1-1"/>
    <property type="match status" value="1"/>
</dbReference>
<dbReference type="NCBIfam" id="NF003645">
    <property type="entry name" value="PRK05286.1-2"/>
    <property type="match status" value="1"/>
</dbReference>
<dbReference type="NCBIfam" id="NF003646">
    <property type="entry name" value="PRK05286.1-4"/>
    <property type="match status" value="1"/>
</dbReference>
<dbReference type="NCBIfam" id="NF003652">
    <property type="entry name" value="PRK05286.2-5"/>
    <property type="match status" value="1"/>
</dbReference>
<dbReference type="NCBIfam" id="TIGR01036">
    <property type="entry name" value="pyrD_sub2"/>
    <property type="match status" value="1"/>
</dbReference>
<dbReference type="PANTHER" id="PTHR48109:SF4">
    <property type="entry name" value="DIHYDROOROTATE DEHYDROGENASE (QUINONE), MITOCHONDRIAL"/>
    <property type="match status" value="1"/>
</dbReference>
<dbReference type="PANTHER" id="PTHR48109">
    <property type="entry name" value="DIHYDROOROTATE DEHYDROGENASE (QUINONE), MITOCHONDRIAL-RELATED"/>
    <property type="match status" value="1"/>
</dbReference>
<dbReference type="Pfam" id="PF01180">
    <property type="entry name" value="DHO_dh"/>
    <property type="match status" value="1"/>
</dbReference>
<dbReference type="PIRSF" id="PIRSF000164">
    <property type="entry name" value="DHO_oxidase"/>
    <property type="match status" value="1"/>
</dbReference>
<dbReference type="SUPFAM" id="SSF51395">
    <property type="entry name" value="FMN-linked oxidoreductases"/>
    <property type="match status" value="1"/>
</dbReference>
<dbReference type="PROSITE" id="PS00911">
    <property type="entry name" value="DHODEHASE_1"/>
    <property type="match status" value="1"/>
</dbReference>
<dbReference type="PROSITE" id="PS00912">
    <property type="entry name" value="DHODEHASE_2"/>
    <property type="match status" value="1"/>
</dbReference>